<name>IOLB_HALH5</name>
<reference key="1">
    <citation type="journal article" date="2000" name="Nucleic Acids Res.">
        <title>Complete genome sequence of the alkaliphilic bacterium Bacillus halodurans and genomic sequence comparison with Bacillus subtilis.</title>
        <authorList>
            <person name="Takami H."/>
            <person name="Nakasone K."/>
            <person name="Takaki Y."/>
            <person name="Maeno G."/>
            <person name="Sasaki R."/>
            <person name="Masui N."/>
            <person name="Fuji F."/>
            <person name="Hirama C."/>
            <person name="Nakamura Y."/>
            <person name="Ogasawara N."/>
            <person name="Kuhara S."/>
            <person name="Horikoshi K."/>
        </authorList>
    </citation>
    <scope>NUCLEOTIDE SEQUENCE [LARGE SCALE GENOMIC DNA]</scope>
    <source>
        <strain>ATCC BAA-125 / DSM 18197 / FERM 7344 / JCM 9153 / C-125</strain>
    </source>
</reference>
<dbReference type="EC" id="5.3.1.30" evidence="1"/>
<dbReference type="EMBL" id="BA000004">
    <property type="protein sequence ID" value="BAB06039.1"/>
    <property type="molecule type" value="Genomic_DNA"/>
</dbReference>
<dbReference type="PIR" id="H83939">
    <property type="entry name" value="H83939"/>
</dbReference>
<dbReference type="RefSeq" id="WP_010898476.1">
    <property type="nucleotide sequence ID" value="NC_002570.2"/>
</dbReference>
<dbReference type="SMR" id="Q9KAG7"/>
<dbReference type="STRING" id="272558.gene:10728218"/>
<dbReference type="GeneID" id="87597855"/>
<dbReference type="KEGG" id="bha:BH2320"/>
<dbReference type="eggNOG" id="COG3718">
    <property type="taxonomic scope" value="Bacteria"/>
</dbReference>
<dbReference type="HOGENOM" id="CLU_066438_1_0_9"/>
<dbReference type="OrthoDB" id="9799936at2"/>
<dbReference type="UniPathway" id="UPA00076">
    <property type="reaction ID" value="UER00920"/>
</dbReference>
<dbReference type="Proteomes" id="UP000001258">
    <property type="component" value="Chromosome"/>
</dbReference>
<dbReference type="GO" id="GO:0102482">
    <property type="term" value="F:5-deoxy-D-glucuronate isomerase activity"/>
    <property type="evidence" value="ECO:0007669"/>
    <property type="project" value="UniProtKB-EC"/>
</dbReference>
<dbReference type="GO" id="GO:0008880">
    <property type="term" value="F:glucuronate isomerase activity"/>
    <property type="evidence" value="ECO:0007669"/>
    <property type="project" value="InterPro"/>
</dbReference>
<dbReference type="GO" id="GO:0019310">
    <property type="term" value="P:inositol catabolic process"/>
    <property type="evidence" value="ECO:0007669"/>
    <property type="project" value="UniProtKB-UniRule"/>
</dbReference>
<dbReference type="Gene3D" id="2.60.120.10">
    <property type="entry name" value="Jelly Rolls"/>
    <property type="match status" value="2"/>
</dbReference>
<dbReference type="HAMAP" id="MF_01673">
    <property type="entry name" value="IolB"/>
    <property type="match status" value="1"/>
</dbReference>
<dbReference type="InterPro" id="IPR024203">
    <property type="entry name" value="Deoxy-glucuronate_isom_IolB"/>
</dbReference>
<dbReference type="InterPro" id="IPR023770">
    <property type="entry name" value="IolB_Bacilli"/>
</dbReference>
<dbReference type="InterPro" id="IPR021120">
    <property type="entry name" value="KduI/IolB_isomerase"/>
</dbReference>
<dbReference type="InterPro" id="IPR014710">
    <property type="entry name" value="RmlC-like_jellyroll"/>
</dbReference>
<dbReference type="InterPro" id="IPR011051">
    <property type="entry name" value="RmlC_Cupin_sf"/>
</dbReference>
<dbReference type="NCBIfam" id="TIGR04378">
    <property type="entry name" value="myo_inos_iolB"/>
    <property type="match status" value="1"/>
</dbReference>
<dbReference type="PANTHER" id="PTHR39193">
    <property type="entry name" value="5-DEOXY-GLUCURONATE ISOMERASE"/>
    <property type="match status" value="1"/>
</dbReference>
<dbReference type="PANTHER" id="PTHR39193:SF1">
    <property type="entry name" value="5-DEOXY-GLUCURONATE ISOMERASE"/>
    <property type="match status" value="1"/>
</dbReference>
<dbReference type="Pfam" id="PF04962">
    <property type="entry name" value="KduI"/>
    <property type="match status" value="1"/>
</dbReference>
<dbReference type="PIRSF" id="PIRSF036628">
    <property type="entry name" value="IolB"/>
    <property type="match status" value="1"/>
</dbReference>
<dbReference type="SUPFAM" id="SSF51182">
    <property type="entry name" value="RmlC-like cupins"/>
    <property type="match status" value="1"/>
</dbReference>
<protein>
    <recommendedName>
        <fullName evidence="1">5-deoxy-glucuronate isomerase</fullName>
        <shortName evidence="1">5DG isomerase</shortName>
        <ecNumber evidence="1">5.3.1.30</ecNumber>
    </recommendedName>
</protein>
<organism>
    <name type="scientific">Halalkalibacterium halodurans (strain ATCC BAA-125 / DSM 18197 / FERM 7344 / JCM 9153 / C-125)</name>
    <name type="common">Bacillus halodurans</name>
    <dbReference type="NCBI Taxonomy" id="272558"/>
    <lineage>
        <taxon>Bacteria</taxon>
        <taxon>Bacillati</taxon>
        <taxon>Bacillota</taxon>
        <taxon>Bacilli</taxon>
        <taxon>Bacillales</taxon>
        <taxon>Bacillaceae</taxon>
        <taxon>Halalkalibacterium (ex Joshi et al. 2022)</taxon>
    </lineage>
</organism>
<proteinExistence type="inferred from homology"/>
<keyword id="KW-0413">Isomerase</keyword>
<keyword id="KW-1185">Reference proteome</keyword>
<evidence type="ECO:0000255" key="1">
    <source>
        <dbReference type="HAMAP-Rule" id="MF_01673"/>
    </source>
</evidence>
<accession>Q9KAG7</accession>
<comment type="function">
    <text evidence="1">Involved in the isomerization of 5-deoxy-glucuronate (5DG) to 5-dehydro-2-deoxy-D-gluconate (DKG or 2-deoxy-5-keto-D-gluconate).</text>
</comment>
<comment type="catalytic activity">
    <reaction evidence="1">
        <text>5-deoxy-D-glucuronate = 5-dehydro-2-deoxy-D-gluconate</text>
        <dbReference type="Rhea" id="RHEA:25840"/>
        <dbReference type="ChEBI" id="CHEBI:16669"/>
        <dbReference type="ChEBI" id="CHEBI:58852"/>
        <dbReference type="EC" id="5.3.1.30"/>
    </reaction>
</comment>
<comment type="pathway">
    <text evidence="1">Polyol metabolism; myo-inositol degradation into acetyl-CoA; acetyl-CoA from myo-inositol: step 4/7.</text>
</comment>
<comment type="similarity">
    <text evidence="1">Belongs to the isomerase IolB family.</text>
</comment>
<gene>
    <name evidence="1" type="primary">iolB</name>
    <name type="ordered locus">BH2320</name>
</gene>
<feature type="chain" id="PRO_0000352384" description="5-deoxy-glucuronate isomerase">
    <location>
        <begin position="1"/>
        <end position="270"/>
    </location>
</feature>
<sequence length="270" mass="30481">MSQLLRKPERAEISKGVTLVHDVTADNASLEYVSFKALDLSQGATYSETLENKECCIVVVTGKVHVTDHEVTFENIGTRESVFEKKPTDSVYVSNNQTFSIEAVTGARVALCYAPSKNQLPTKLIKAEDNGVEHRGKGNNQRMVHNILPDSDPSANSLLVVEVFTESGNWSSYPPHKHDRDLLPEESLLEETYYHEVNPKQGFVFQRVYTDDRSLDETMTVENENMVIVPKGYHPVGVPEGYASYYLNVMAGPKRIWKFFNDPAHEWIIE</sequence>